<proteinExistence type="evidence at protein level"/>
<protein>
    <recommendedName>
        <fullName>Probable protein-export membrane protein SecG</fullName>
    </recommendedName>
</protein>
<accession>P9WGN5</accession>
<accession>L0T9E7</accession>
<accession>O06819</accession>
<accession>P66791</accession>
<keyword id="KW-1003">Cell membrane</keyword>
<keyword id="KW-0472">Membrane</keyword>
<keyword id="KW-0653">Protein transport</keyword>
<keyword id="KW-1185">Reference proteome</keyword>
<keyword id="KW-0811">Translocation</keyword>
<keyword id="KW-0812">Transmembrane</keyword>
<keyword id="KW-1133">Transmembrane helix</keyword>
<keyword id="KW-0813">Transport</keyword>
<feature type="chain" id="PRO_0000157235" description="Probable protein-export membrane protein SecG">
    <location>
        <begin position="1"/>
        <end position="77"/>
    </location>
</feature>
<feature type="transmembrane region" description="Helical" evidence="2">
    <location>
        <begin position="3"/>
        <end position="23"/>
    </location>
</feature>
<feature type="transmembrane region" description="Helical" evidence="2">
    <location>
        <begin position="55"/>
        <end position="75"/>
    </location>
</feature>
<gene>
    <name type="primary">secG</name>
    <name type="ordered locus">Rv1440</name>
    <name type="ORF">MTCY493.14c</name>
</gene>
<comment type="function">
    <text evidence="1">Involved in protein export. Participates in an early event of protein translocation (By similarity).</text>
</comment>
<comment type="subcellular location">
    <subcellularLocation>
        <location evidence="3">Cell membrane</location>
        <topology evidence="3">Multi-pass membrane protein</topology>
    </subcellularLocation>
</comment>
<comment type="similarity">
    <text evidence="3">Belongs to the SecG family.</text>
</comment>
<evidence type="ECO:0000250" key="1"/>
<evidence type="ECO:0000255" key="2"/>
<evidence type="ECO:0000305" key="3"/>
<name>SECG_MYCTU</name>
<organism>
    <name type="scientific">Mycobacterium tuberculosis (strain ATCC 25618 / H37Rv)</name>
    <dbReference type="NCBI Taxonomy" id="83332"/>
    <lineage>
        <taxon>Bacteria</taxon>
        <taxon>Bacillati</taxon>
        <taxon>Actinomycetota</taxon>
        <taxon>Actinomycetes</taxon>
        <taxon>Mycobacteriales</taxon>
        <taxon>Mycobacteriaceae</taxon>
        <taxon>Mycobacterium</taxon>
        <taxon>Mycobacterium tuberculosis complex</taxon>
    </lineage>
</organism>
<dbReference type="EMBL" id="AL123456">
    <property type="protein sequence ID" value="CCP44199.1"/>
    <property type="molecule type" value="Genomic_DNA"/>
</dbReference>
<dbReference type="PIR" id="C70916">
    <property type="entry name" value="C70916"/>
</dbReference>
<dbReference type="RefSeq" id="NP_215956.2">
    <property type="nucleotide sequence ID" value="NC_000962.3"/>
</dbReference>
<dbReference type="RefSeq" id="WP_003407407.1">
    <property type="nucleotide sequence ID" value="NZ_NVQJ01000038.1"/>
</dbReference>
<dbReference type="FunCoup" id="P9WGN5">
    <property type="interactions" value="23"/>
</dbReference>
<dbReference type="STRING" id="83332.Rv1440"/>
<dbReference type="PaxDb" id="83332-Rv1440"/>
<dbReference type="DNASU" id="886624"/>
<dbReference type="GeneID" id="45425418"/>
<dbReference type="GeneID" id="886624"/>
<dbReference type="KEGG" id="mtu:Rv1440"/>
<dbReference type="KEGG" id="mtv:RVBD_1440"/>
<dbReference type="TubercuList" id="Rv1440"/>
<dbReference type="eggNOG" id="COG1314">
    <property type="taxonomic scope" value="Bacteria"/>
</dbReference>
<dbReference type="InParanoid" id="P9WGN5"/>
<dbReference type="OrthoDB" id="4337190at2"/>
<dbReference type="Reactome" id="R-HSA-1222387">
    <property type="pathway name" value="Tolerance of reactive oxygen produced by macrophages"/>
</dbReference>
<dbReference type="Proteomes" id="UP000001584">
    <property type="component" value="Chromosome"/>
</dbReference>
<dbReference type="GO" id="GO:0005886">
    <property type="term" value="C:plasma membrane"/>
    <property type="evidence" value="ECO:0000304"/>
    <property type="project" value="Reactome"/>
</dbReference>
<dbReference type="GO" id="GO:0015450">
    <property type="term" value="F:protein-transporting ATPase activity"/>
    <property type="evidence" value="ECO:0007669"/>
    <property type="project" value="InterPro"/>
</dbReference>
<dbReference type="GO" id="GO:0009306">
    <property type="term" value="P:protein secretion"/>
    <property type="evidence" value="ECO:0007669"/>
    <property type="project" value="InterPro"/>
</dbReference>
<dbReference type="InterPro" id="IPR004692">
    <property type="entry name" value="SecG"/>
</dbReference>
<dbReference type="NCBIfam" id="TIGR00810">
    <property type="entry name" value="secG"/>
    <property type="match status" value="1"/>
</dbReference>
<dbReference type="Pfam" id="PF03840">
    <property type="entry name" value="SecG"/>
    <property type="match status" value="1"/>
</dbReference>
<reference key="1">
    <citation type="journal article" date="1998" name="Nature">
        <title>Deciphering the biology of Mycobacterium tuberculosis from the complete genome sequence.</title>
        <authorList>
            <person name="Cole S.T."/>
            <person name="Brosch R."/>
            <person name="Parkhill J."/>
            <person name="Garnier T."/>
            <person name="Churcher C.M."/>
            <person name="Harris D.E."/>
            <person name="Gordon S.V."/>
            <person name="Eiglmeier K."/>
            <person name="Gas S."/>
            <person name="Barry C.E. III"/>
            <person name="Tekaia F."/>
            <person name="Badcock K."/>
            <person name="Basham D."/>
            <person name="Brown D."/>
            <person name="Chillingworth T."/>
            <person name="Connor R."/>
            <person name="Davies R.M."/>
            <person name="Devlin K."/>
            <person name="Feltwell T."/>
            <person name="Gentles S."/>
            <person name="Hamlin N."/>
            <person name="Holroyd S."/>
            <person name="Hornsby T."/>
            <person name="Jagels K."/>
            <person name="Krogh A."/>
            <person name="McLean J."/>
            <person name="Moule S."/>
            <person name="Murphy L.D."/>
            <person name="Oliver S."/>
            <person name="Osborne J."/>
            <person name="Quail M.A."/>
            <person name="Rajandream M.A."/>
            <person name="Rogers J."/>
            <person name="Rutter S."/>
            <person name="Seeger K."/>
            <person name="Skelton S."/>
            <person name="Squares S."/>
            <person name="Squares R."/>
            <person name="Sulston J.E."/>
            <person name="Taylor K."/>
            <person name="Whitehead S."/>
            <person name="Barrell B.G."/>
        </authorList>
    </citation>
    <scope>NUCLEOTIDE SEQUENCE [LARGE SCALE GENOMIC DNA]</scope>
    <source>
        <strain>ATCC 25618 / H37Rv</strain>
    </source>
</reference>
<reference key="2">
    <citation type="journal article" date="2011" name="Mol. Cell. Proteomics">
        <title>Proteogenomic analysis of Mycobacterium tuberculosis by high resolution mass spectrometry.</title>
        <authorList>
            <person name="Kelkar D.S."/>
            <person name="Kumar D."/>
            <person name="Kumar P."/>
            <person name="Balakrishnan L."/>
            <person name="Muthusamy B."/>
            <person name="Yadav A.K."/>
            <person name="Shrivastava P."/>
            <person name="Marimuthu A."/>
            <person name="Anand S."/>
            <person name="Sundaram H."/>
            <person name="Kingsbury R."/>
            <person name="Harsha H.C."/>
            <person name="Nair B."/>
            <person name="Prasad T.S."/>
            <person name="Chauhan D.S."/>
            <person name="Katoch K."/>
            <person name="Katoch V.M."/>
            <person name="Kumar P."/>
            <person name="Chaerkady R."/>
            <person name="Ramachandran S."/>
            <person name="Dash D."/>
            <person name="Pandey A."/>
        </authorList>
    </citation>
    <scope>IDENTIFICATION BY MASS SPECTROMETRY [LARGE SCALE ANALYSIS]</scope>
    <source>
        <strain>ATCC 25618 / H37Rv</strain>
    </source>
</reference>
<sequence length="77" mass="8163">MELALQITLIVTSVLVVLLVLLHRAKGGGLSTLFGGGVQSSLSGSTVVEKNLDRLTLFVTGIWLVSIIGVALLIKYR</sequence>